<dbReference type="EMBL" id="J02202">
    <property type="protein sequence ID" value="AAA45486.1"/>
    <property type="molecule type" value="Genomic_RNA"/>
</dbReference>
<dbReference type="PIR" id="B93217">
    <property type="entry name" value="NKVLA2"/>
</dbReference>
<dbReference type="PDB" id="2G33">
    <property type="method" value="X-ray"/>
    <property type="resolution" value="3.96 A"/>
    <property type="chains" value="A/B/C/D=1-149"/>
</dbReference>
<dbReference type="PDB" id="2G34">
    <property type="method" value="X-ray"/>
    <property type="resolution" value="5.05 A"/>
    <property type="chains" value="A/B/C/D=1-149"/>
</dbReference>
<dbReference type="PDB" id="2QIJ">
    <property type="method" value="X-ray"/>
    <property type="resolution" value="8.90 A"/>
    <property type="chains" value="A/B/C/D=3-148"/>
</dbReference>
<dbReference type="PDB" id="3KXS">
    <property type="method" value="X-ray"/>
    <property type="resolution" value="2.25 A"/>
    <property type="chains" value="A/B/C/D/E/F=1-143"/>
</dbReference>
<dbReference type="PDB" id="4BMG">
    <property type="method" value="X-ray"/>
    <property type="resolution" value="3.00 A"/>
    <property type="chains" value="A/B/C/D/E/F=1-149"/>
</dbReference>
<dbReference type="PDB" id="4G93">
    <property type="method" value="X-ray"/>
    <property type="resolution" value="4.20 A"/>
    <property type="chains" value="A/B/C/D=1-149"/>
</dbReference>
<dbReference type="PDB" id="5D7Y">
    <property type="method" value="X-ray"/>
    <property type="resolution" value="3.89 A"/>
    <property type="chains" value="A/B/C/D=1-149"/>
</dbReference>
<dbReference type="PDB" id="5E0I">
    <property type="method" value="X-ray"/>
    <property type="resolution" value="1.95 A"/>
    <property type="chains" value="A/B/C/D/E/F=1-149"/>
</dbReference>
<dbReference type="PDB" id="5GMZ">
    <property type="method" value="X-ray"/>
    <property type="resolution" value="1.70 A"/>
    <property type="chains" value="A/B/C/D/E/F=1-149"/>
</dbReference>
<dbReference type="PDB" id="5WTW">
    <property type="method" value="X-ray"/>
    <property type="resolution" value="2.62 A"/>
    <property type="chains" value="A/B=1-142"/>
</dbReference>
<dbReference type="PDB" id="6BVF">
    <property type="method" value="EM"/>
    <property type="resolution" value="4.00 A"/>
    <property type="chains" value="A/B/C/D=1-149"/>
</dbReference>
<dbReference type="PDB" id="6BVN">
    <property type="method" value="EM"/>
    <property type="resolution" value="4.00 A"/>
    <property type="chains" value="A/B/C=1-149"/>
</dbReference>
<dbReference type="PDB" id="6CWD">
    <property type="method" value="X-ray"/>
    <property type="resolution" value="3.33 A"/>
    <property type="chains" value="C/D/F/H=1-149"/>
</dbReference>
<dbReference type="PDB" id="6CWT">
    <property type="method" value="X-ray"/>
    <property type="resolution" value="3.15 A"/>
    <property type="chains" value="E/F=1-149"/>
</dbReference>
<dbReference type="PDB" id="6J10">
    <property type="method" value="X-ray"/>
    <property type="resolution" value="2.30 A"/>
    <property type="chains" value="A/B/C/D/E/F=1-149"/>
</dbReference>
<dbReference type="PDB" id="6VZP">
    <property type="method" value="EM"/>
    <property type="resolution" value="3.60 A"/>
    <property type="chains" value="A/B/C/D=1-149"/>
</dbReference>
<dbReference type="PDB" id="6W0K">
    <property type="method" value="EM"/>
    <property type="resolution" value="4.60 A"/>
    <property type="chains" value="A/B/C/D=1-149"/>
</dbReference>
<dbReference type="PDB" id="6WFS">
    <property type="method" value="EM"/>
    <property type="resolution" value="4.60 A"/>
    <property type="chains" value="A/B/C/D=1-149"/>
</dbReference>
<dbReference type="PDB" id="7K5M">
    <property type="method" value="X-ray"/>
    <property type="resolution" value="2.65 A"/>
    <property type="chains" value="A/B/C/D/E/F=1-149"/>
</dbReference>
<dbReference type="PDB" id="7S76">
    <property type="method" value="X-ray"/>
    <property type="resolution" value="2.50 A"/>
    <property type="chains" value="A/B/C/D/E/F=1-149"/>
</dbReference>
<dbReference type="PDB" id="7UMI">
    <property type="method" value="X-ray"/>
    <property type="resolution" value="1.99 A"/>
    <property type="chains" value="A=168-177"/>
</dbReference>
<dbReference type="PDB" id="8GBU">
    <property type="method" value="X-ray"/>
    <property type="resolution" value="2.50 A"/>
    <property type="chains" value="A/B/C/D/E/F=1-149"/>
</dbReference>
<dbReference type="PDB" id="8I71">
    <property type="method" value="X-ray"/>
    <property type="resolution" value="1.60 A"/>
    <property type="chains" value="A/B/C/D/E/F=1-149"/>
</dbReference>
<dbReference type="PDB" id="8KHU">
    <property type="method" value="X-ray"/>
    <property type="resolution" value="2.00 A"/>
    <property type="chains" value="A/B/C/D/E/F/G=1-149"/>
</dbReference>
<dbReference type="PDB" id="8UYX">
    <property type="method" value="EM"/>
    <property type="resolution" value="2.70 A"/>
    <property type="chains" value="A/B/C/D=1-143"/>
</dbReference>
<dbReference type="PDB" id="8UYY">
    <property type="method" value="EM"/>
    <property type="resolution" value="3.00 A"/>
    <property type="chains" value="A/B/C/D=1-183"/>
</dbReference>
<dbReference type="PDB" id="8UYZ">
    <property type="method" value="EM"/>
    <property type="resolution" value="3.90 A"/>
    <property type="chains" value="A/B/C/D=1-183"/>
</dbReference>
<dbReference type="PDB" id="8W9G">
    <property type="method" value="X-ray"/>
    <property type="resolution" value="2.60 A"/>
    <property type="chains" value="A/B/C/D/E/F=1-149"/>
</dbReference>
<dbReference type="PDBsum" id="2G33"/>
<dbReference type="PDBsum" id="2G34"/>
<dbReference type="PDBsum" id="2QIJ"/>
<dbReference type="PDBsum" id="3KXS"/>
<dbReference type="PDBsum" id="4BMG"/>
<dbReference type="PDBsum" id="4G93"/>
<dbReference type="PDBsum" id="5D7Y"/>
<dbReference type="PDBsum" id="5E0I"/>
<dbReference type="PDBsum" id="5GMZ"/>
<dbReference type="PDBsum" id="5WTW"/>
<dbReference type="PDBsum" id="6BVF"/>
<dbReference type="PDBsum" id="6BVN"/>
<dbReference type="PDBsum" id="6CWD"/>
<dbReference type="PDBsum" id="6CWT"/>
<dbReference type="PDBsum" id="6J10"/>
<dbReference type="PDBsum" id="6VZP"/>
<dbReference type="PDBsum" id="6W0K"/>
<dbReference type="PDBsum" id="6WFS"/>
<dbReference type="PDBsum" id="7K5M"/>
<dbReference type="PDBsum" id="7S76"/>
<dbReference type="PDBsum" id="7UMI"/>
<dbReference type="PDBsum" id="8GBU"/>
<dbReference type="PDBsum" id="8I71"/>
<dbReference type="PDBsum" id="8KHU"/>
<dbReference type="PDBsum" id="8UYX"/>
<dbReference type="PDBsum" id="8UYY"/>
<dbReference type="PDBsum" id="8UYZ"/>
<dbReference type="PDBsum" id="8W9G"/>
<dbReference type="BMRB" id="P03147"/>
<dbReference type="EMDB" id="EMD-21495"/>
<dbReference type="EMDB" id="EMD-21497"/>
<dbReference type="EMDB" id="EMD-21653"/>
<dbReference type="EMDB" id="EMD-7294"/>
<dbReference type="EMDB" id="EMD-7295"/>
<dbReference type="SMR" id="P03147"/>
<dbReference type="DIP" id="DIP-60476N"/>
<dbReference type="ABCD" id="P03147">
    <property type="antibodies" value="2 sequenced antibodies"/>
</dbReference>
<dbReference type="EvolutionaryTrace" id="P03147"/>
<dbReference type="GO" id="GO:0043657">
    <property type="term" value="C:host cell"/>
    <property type="evidence" value="ECO:0007669"/>
    <property type="project" value="GOC"/>
</dbReference>
<dbReference type="GO" id="GO:0030430">
    <property type="term" value="C:host cell cytoplasm"/>
    <property type="evidence" value="ECO:0007669"/>
    <property type="project" value="UniProtKB-SubCell"/>
</dbReference>
<dbReference type="GO" id="GO:0039619">
    <property type="term" value="C:T=4 icosahedral viral capsid"/>
    <property type="evidence" value="ECO:0007669"/>
    <property type="project" value="UniProtKB-UniRule"/>
</dbReference>
<dbReference type="GO" id="GO:0003677">
    <property type="term" value="F:DNA binding"/>
    <property type="evidence" value="ECO:0007669"/>
    <property type="project" value="UniProtKB-UniRule"/>
</dbReference>
<dbReference type="GO" id="GO:0042802">
    <property type="term" value="F:identical protein binding"/>
    <property type="evidence" value="ECO:0000353"/>
    <property type="project" value="IntAct"/>
</dbReference>
<dbReference type="GO" id="GO:0003723">
    <property type="term" value="F:RNA binding"/>
    <property type="evidence" value="ECO:0007669"/>
    <property type="project" value="UniProtKB-UniRule"/>
</dbReference>
<dbReference type="GO" id="GO:0005198">
    <property type="term" value="F:structural molecule activity"/>
    <property type="evidence" value="ECO:0007669"/>
    <property type="project" value="UniProtKB-UniRule"/>
</dbReference>
<dbReference type="GO" id="GO:0075521">
    <property type="term" value="P:microtubule-dependent intracellular transport of viral material towards nucleus"/>
    <property type="evidence" value="ECO:0007669"/>
    <property type="project" value="UniProtKB-UniRule"/>
</dbReference>
<dbReference type="GO" id="GO:0046718">
    <property type="term" value="P:symbiont entry into host cell"/>
    <property type="evidence" value="ECO:0007669"/>
    <property type="project" value="UniProtKB-UniRule"/>
</dbReference>
<dbReference type="GO" id="GO:0075732">
    <property type="term" value="P:viral penetration into host nucleus"/>
    <property type="evidence" value="ECO:0007669"/>
    <property type="project" value="UniProtKB-UniRule"/>
</dbReference>
<dbReference type="FunFam" id="1.10.4090.10:FF:000001">
    <property type="entry name" value="Capsid protein"/>
    <property type="match status" value="1"/>
</dbReference>
<dbReference type="Gene3D" id="1.10.4090.10">
    <property type="entry name" value="Viral capsid, core domain supefamily, Hepatitis B virus"/>
    <property type="match status" value="1"/>
</dbReference>
<dbReference type="HAMAP" id="MF_04076">
    <property type="entry name" value="HBV_HBEAG"/>
    <property type="match status" value="1"/>
</dbReference>
<dbReference type="InterPro" id="IPR002006">
    <property type="entry name" value="Hepatitis_core"/>
</dbReference>
<dbReference type="InterPro" id="IPR036459">
    <property type="entry name" value="Viral_capsid_core_dom_sf_HBV"/>
</dbReference>
<dbReference type="Pfam" id="PF00906">
    <property type="entry name" value="Hepatitis_core"/>
    <property type="match status" value="3"/>
</dbReference>
<dbReference type="SUPFAM" id="SSF47852">
    <property type="entry name" value="Hepatitis B viral capsid (hbcag)"/>
    <property type="match status" value="1"/>
</dbReference>
<protein>
    <recommendedName>
        <fullName evidence="1">Capsid protein</fullName>
    </recommendedName>
    <alternativeName>
        <fullName evidence="1">Core antigen</fullName>
    </alternativeName>
    <alternativeName>
        <fullName evidence="1">Core protein</fullName>
    </alternativeName>
    <alternativeName>
        <fullName evidence="1">HBcAg</fullName>
    </alternativeName>
    <alternativeName>
        <fullName evidence="1">p21.5</fullName>
    </alternativeName>
</protein>
<sequence>MDIDPYKEFGATVELLSFLPSDFFPSVRDLLDTAAALYRDALESPEHCSPHHTALRQAILCWGDLMTLATWVGTNLEDPASRDLVVSYVNTNVGLKFRQLLWFHISCLTFGRETVLEYLVSFGVWIRTPPAYRPPNAPILSTLPETTVVRRRGRSPRRRTPSPRRRRSQSPRRRRSQSRESQC</sequence>
<organismHost>
    <name type="scientific">Homo sapiens</name>
    <name type="common">Human</name>
    <dbReference type="NCBI Taxonomy" id="9606"/>
</organismHost>
<organismHost>
    <name type="scientific">Pan troglodytes</name>
    <name type="common">Chimpanzee</name>
    <dbReference type="NCBI Taxonomy" id="9598"/>
</organismHost>
<proteinExistence type="evidence at protein level"/>
<gene>
    <name evidence="1" type="primary">C</name>
</gene>
<comment type="function">
    <text evidence="1">Self assembles to form an icosahedral capsid. Most capsids appear to be large particles with an icosahedral symmetry of T=4 and consist of 240 copies of capsid protein, though a fraction forms smaller T=3 particles consisting of 180 capsid proteins. Entering capsids are transported along microtubules to the nucleus. Phosphorylation of the capsid is thought to induce exposure of nuclear localization signal in the C-terminal portion of the capsid protein that allows binding to the nuclear pore complex via the importin (karyopherin-) alpha and beta. Capsids are imported in intact form through the nuclear pore into the nuclear basket, where it probably binds NUP153. Only capsids that contain the mature viral genome can release the viral DNA and capsid protein into the nucleoplasm. Immature capsids get stuck in the basket. Capsids encapsulate the pre-genomic RNA and the P protein. Pre-genomic RNA is reverse-transcribed into DNA while the capsid is still in the cytoplasm. The capsid can then either be directed to the nucleus, providing more genomes for transcription, or bud through the endoplasmic reticulum to provide new virions.</text>
</comment>
<comment type="subunit">
    <text evidence="1">Homodimerizes, then multimerizes. Interacts with cytosol exposed regions of viral L glycoprotein present in the reticulum-to-Golgi compartment. Interacts with human FLNB. Phosphorylated form interacts with host importin alpha; this interaction depends on the exposure of the NLS, which itself depends upon genome maturation and/or phosphorylation of the capsid protein. Interacts with host NUP153.</text>
</comment>
<comment type="interaction">
    <interactant intactId="EBI-15711833">
        <id>P03147</id>
    </interactant>
    <interactant intactId="EBI-15711833">
        <id>P03147</id>
        <label>C</label>
    </interactant>
    <organismsDiffer>false</organismsDiffer>
    <experiments>7</experiments>
</comment>
<comment type="subcellular location">
    <subcellularLocation>
        <location evidence="1">Virion</location>
    </subcellularLocation>
    <subcellularLocation>
        <location evidence="1">Host cytoplasm</location>
    </subcellularLocation>
</comment>
<comment type="PTM">
    <text evidence="1">Phosphorylated by host SRPK1, SRPK2, and maybe protein kinase C or GAPDH. Phosphorylation is critical for pregenomic RNA packaging. Protein kinase C phosphorylation is stimulated by HBx protein and may play a role in transport of the viral genome to the nucleus at the late step during the viral replication cycle.</text>
</comment>
<comment type="similarity">
    <text evidence="1">Belongs to the orthohepadnavirus core antigen family.</text>
</comment>
<evidence type="ECO:0000255" key="1">
    <source>
        <dbReference type="HAMAP-Rule" id="MF_04076"/>
    </source>
</evidence>
<evidence type="ECO:0000256" key="2">
    <source>
        <dbReference type="SAM" id="MobiDB-lite"/>
    </source>
</evidence>
<evidence type="ECO:0000269" key="3">
    <source>
    </source>
</evidence>
<evidence type="ECO:0007829" key="4">
    <source>
        <dbReference type="PDB" id="8I71"/>
    </source>
</evidence>
<name>CAPSD_HBVD1</name>
<reference key="1">
    <citation type="journal article" date="1979" name="Nature">
        <title>Hepatitis B virus genes and their expression in E. coli.</title>
        <authorList>
            <person name="Pasek M."/>
            <person name="Goto T."/>
            <person name="Gilbert W."/>
            <person name="Zink B."/>
            <person name="Schaller H."/>
            <person name="McKay P."/>
            <person name="Leadbetter G."/>
            <person name="Murray K."/>
        </authorList>
    </citation>
    <scope>NUCLEOTIDE SEQUENCE [GENOMIC RNA]</scope>
</reference>
<reference key="2">
    <citation type="journal article" date="1982" name="Proc. Natl. Acad. Sci. U.S.A.">
        <title>Hepatitis B virus core antigen: synthesis in Escherichia coli and application in diagnosis.</title>
        <authorList>
            <person name="Stahl S."/>
            <person name="MacKay P."/>
            <person name="Magazin M."/>
            <person name="Bruce S.A."/>
            <person name="Murray K."/>
        </authorList>
    </citation>
    <scope>CHARACTERIZATION</scope>
</reference>
<reference key="3">
    <citation type="journal article" date="1995" name="Biochemistry">
        <title>Hepatitis core antigen produced in Escherichia coli: subunit composition, conformational analysis, and in vitro capsid assembly.</title>
        <authorList>
            <person name="Wingfield P.T."/>
            <person name="Stahl S.J."/>
            <person name="Williams R.W."/>
            <person name="Steven A.C."/>
        </authorList>
    </citation>
    <scope>FUNCTION</scope>
</reference>
<reference key="4">
    <citation type="journal article" date="2002" name="EMBO J.">
        <title>The morphogenic linker peptide of HBV capsid protein forms a mobile array on the interior surface.</title>
        <authorList>
            <person name="Watts N.R."/>
            <person name="Conway J.F."/>
            <person name="Cheng N."/>
            <person name="Stahl S.J."/>
            <person name="Belnap D.M."/>
            <person name="Steven A.C."/>
            <person name="Wingfield P.T."/>
        </authorList>
    </citation>
    <scope>CAPSID MORPHOGENESIS</scope>
</reference>
<reference key="5">
    <citation type="journal article" date="2002" name="Biochemistry">
        <title>Weak protein-protein interactions are sufficient to drive assembly of hepatitis B virus capsids.</title>
        <authorList>
            <person name="Ceres P."/>
            <person name="Zlotnick A."/>
        </authorList>
    </citation>
    <scope>CAPSID ASSEMBLY</scope>
</reference>
<reference key="6">
    <citation type="journal article" date="2004" name="J. Virol.">
        <title>Hepatitis B virus capsid assembly is enhanced by naturally occurring mutation F97L.</title>
        <authorList>
            <person name="Ceres P."/>
            <person name="Stray S.J."/>
            <person name="Zlotnick A."/>
        </authorList>
    </citation>
    <scope>MUTAGENESIS OF PHE-97</scope>
</reference>
<reference key="7">
    <citation type="journal article" date="2006" name="J. Virol.">
        <title>Global structural changes in hepatitis B virus capsids induced by the assembly effector HAP1.</title>
        <authorList>
            <person name="Bourne C.R."/>
            <person name="Finn M.G."/>
            <person name="Zlotnick A."/>
        </authorList>
    </citation>
    <scope>X-RAY CRYSTALLOGRAPHY (3.96 ANGSTROMS) OF 0-149</scope>
</reference>
<accession>P03147</accession>
<organism>
    <name type="scientific">Hepatitis B virus genotype D subtype adw (isolate United Kingdom/adyw/1979)</name>
    <name type="common">HBV-D</name>
    <dbReference type="NCBI Taxonomy" id="10419"/>
    <lineage>
        <taxon>Viruses</taxon>
        <taxon>Riboviria</taxon>
        <taxon>Pararnavirae</taxon>
        <taxon>Artverviricota</taxon>
        <taxon>Revtraviricetes</taxon>
        <taxon>Blubervirales</taxon>
        <taxon>Hepadnaviridae</taxon>
        <taxon>Orthohepadnavirus</taxon>
        <taxon>Hepatitis B virus</taxon>
    </lineage>
</organism>
<feature type="chain" id="PRO_0000222318" description="Capsid protein">
    <location>
        <begin position="1"/>
        <end position="183"/>
    </location>
</feature>
<feature type="repeat" description="1; half-length">
    <location>
        <begin position="155"/>
        <end position="161"/>
    </location>
</feature>
<feature type="repeat" description="2">
    <location>
        <begin position="162"/>
        <end position="169"/>
    </location>
</feature>
<feature type="repeat" description="3">
    <location>
        <begin position="170"/>
        <end position="177"/>
    </location>
</feature>
<feature type="region of interest" description="Disordered" evidence="2">
    <location>
        <begin position="136"/>
        <end position="183"/>
    </location>
</feature>
<feature type="region of interest" description="3 X 8 AA repeats of S-P-R-R-R-[PR]-S-Q">
    <location>
        <begin position="155"/>
        <end position="177"/>
    </location>
</feature>
<feature type="region of interest" description="RNA binding" evidence="1">
    <location>
        <begin position="177"/>
        <end position="183"/>
    </location>
</feature>
<feature type="short sequence motif" description="Bipartite nuclear localization signal" evidence="1">
    <location>
        <begin position="158"/>
        <end position="175"/>
    </location>
</feature>
<feature type="compositionally biased region" description="Basic residues" evidence="2">
    <location>
        <begin position="149"/>
        <end position="176"/>
    </location>
</feature>
<feature type="modified residue" description="Phosphoserine; by host" evidence="1">
    <location>
        <position position="155"/>
    </location>
</feature>
<feature type="modified residue" description="Phosphoserine; by host" evidence="1">
    <location>
        <position position="162"/>
    </location>
</feature>
<feature type="modified residue" description="Phosphoserine; by host" evidence="1">
    <location>
        <position position="170"/>
    </location>
</feature>
<feature type="mutagenesis site" description="Enhances capsid assembly." evidence="3">
    <original>F</original>
    <variation>L</variation>
    <location>
        <position position="97"/>
    </location>
</feature>
<feature type="helix" evidence="4">
    <location>
        <begin position="7"/>
        <end position="9"/>
    </location>
</feature>
<feature type="helix" evidence="4">
    <location>
        <begin position="13"/>
        <end position="16"/>
    </location>
</feature>
<feature type="helix" evidence="4">
    <location>
        <begin position="21"/>
        <end position="23"/>
    </location>
</feature>
<feature type="helix" evidence="4">
    <location>
        <begin position="27"/>
        <end position="42"/>
    </location>
</feature>
<feature type="strand" evidence="4">
    <location>
        <begin position="44"/>
        <end position="46"/>
    </location>
</feature>
<feature type="helix" evidence="4">
    <location>
        <begin position="50"/>
        <end position="74"/>
    </location>
</feature>
<feature type="helix" evidence="4">
    <location>
        <begin position="79"/>
        <end position="91"/>
    </location>
</feature>
<feature type="helix" evidence="4">
    <location>
        <begin position="93"/>
        <end position="110"/>
    </location>
</feature>
<feature type="helix" evidence="4">
    <location>
        <begin position="112"/>
        <end position="127"/>
    </location>
</feature>
<feature type="helix" evidence="4">
    <location>
        <begin position="130"/>
        <end position="132"/>
    </location>
</feature>
<keyword id="KW-0002">3D-structure</keyword>
<keyword id="KW-0167">Capsid protein</keyword>
<keyword id="KW-1176">Cytoplasmic inwards viral transport</keyword>
<keyword id="KW-0238">DNA-binding</keyword>
<keyword id="KW-1035">Host cytoplasm</keyword>
<keyword id="KW-0945">Host-virus interaction</keyword>
<keyword id="KW-1177">Microtubular inwards viral transport</keyword>
<keyword id="KW-0597">Phosphoprotein</keyword>
<keyword id="KW-0677">Repeat</keyword>
<keyword id="KW-0694">RNA-binding</keyword>
<keyword id="KW-1144">T=4 icosahedral capsid protein</keyword>
<keyword id="KW-1163">Viral penetration into host nucleus</keyword>
<keyword id="KW-0946">Virion</keyword>
<keyword id="KW-1160">Virus entry into host cell</keyword>